<dbReference type="EC" id="3.5.1.18" evidence="1"/>
<dbReference type="EMBL" id="CP000548">
    <property type="protein sequence ID" value="ABO05250.1"/>
    <property type="molecule type" value="Genomic_DNA"/>
</dbReference>
<dbReference type="RefSeq" id="WP_004191377.1">
    <property type="nucleotide sequence ID" value="NZ_CP007802.1"/>
</dbReference>
<dbReference type="SMR" id="A3MKV8"/>
<dbReference type="GeneID" id="92979293"/>
<dbReference type="KEGG" id="bmaz:BM44_1786"/>
<dbReference type="KEGG" id="bmn:BMA10247_1343"/>
<dbReference type="PATRIC" id="fig|320389.8.peg.1997"/>
<dbReference type="UniPathway" id="UPA00034">
    <property type="reaction ID" value="UER00021"/>
</dbReference>
<dbReference type="GO" id="GO:0008777">
    <property type="term" value="F:acetylornithine deacetylase activity"/>
    <property type="evidence" value="ECO:0007669"/>
    <property type="project" value="TreeGrafter"/>
</dbReference>
<dbReference type="GO" id="GO:0050897">
    <property type="term" value="F:cobalt ion binding"/>
    <property type="evidence" value="ECO:0007669"/>
    <property type="project" value="UniProtKB-UniRule"/>
</dbReference>
<dbReference type="GO" id="GO:0009014">
    <property type="term" value="F:succinyl-diaminopimelate desuccinylase activity"/>
    <property type="evidence" value="ECO:0007669"/>
    <property type="project" value="UniProtKB-UniRule"/>
</dbReference>
<dbReference type="GO" id="GO:0008270">
    <property type="term" value="F:zinc ion binding"/>
    <property type="evidence" value="ECO:0007669"/>
    <property type="project" value="UniProtKB-UniRule"/>
</dbReference>
<dbReference type="GO" id="GO:0019877">
    <property type="term" value="P:diaminopimelate biosynthetic process"/>
    <property type="evidence" value="ECO:0007669"/>
    <property type="project" value="UniProtKB-UniRule"/>
</dbReference>
<dbReference type="GO" id="GO:0006526">
    <property type="term" value="P:L-arginine biosynthetic process"/>
    <property type="evidence" value="ECO:0007669"/>
    <property type="project" value="TreeGrafter"/>
</dbReference>
<dbReference type="GO" id="GO:0009089">
    <property type="term" value="P:lysine biosynthetic process via diaminopimelate"/>
    <property type="evidence" value="ECO:0007669"/>
    <property type="project" value="UniProtKB-UniRule"/>
</dbReference>
<dbReference type="CDD" id="cd03891">
    <property type="entry name" value="M20_DapE_proteobac"/>
    <property type="match status" value="1"/>
</dbReference>
<dbReference type="FunFam" id="3.30.70.360:FF:000011">
    <property type="entry name" value="Succinyl-diaminopimelate desuccinylase"/>
    <property type="match status" value="1"/>
</dbReference>
<dbReference type="FunFam" id="3.40.630.10:FF:000005">
    <property type="entry name" value="Succinyl-diaminopimelate desuccinylase"/>
    <property type="match status" value="1"/>
</dbReference>
<dbReference type="Gene3D" id="3.40.630.10">
    <property type="entry name" value="Zn peptidases"/>
    <property type="match status" value="2"/>
</dbReference>
<dbReference type="HAMAP" id="MF_01690">
    <property type="entry name" value="DapE"/>
    <property type="match status" value="1"/>
</dbReference>
<dbReference type="InterPro" id="IPR001261">
    <property type="entry name" value="ArgE/DapE_CS"/>
</dbReference>
<dbReference type="InterPro" id="IPR036264">
    <property type="entry name" value="Bact_exopeptidase_dim_dom"/>
</dbReference>
<dbReference type="InterPro" id="IPR005941">
    <property type="entry name" value="DapE_proteobac"/>
</dbReference>
<dbReference type="InterPro" id="IPR002933">
    <property type="entry name" value="Peptidase_M20"/>
</dbReference>
<dbReference type="InterPro" id="IPR011650">
    <property type="entry name" value="Peptidase_M20_dimer"/>
</dbReference>
<dbReference type="InterPro" id="IPR050072">
    <property type="entry name" value="Peptidase_M20A"/>
</dbReference>
<dbReference type="NCBIfam" id="TIGR01246">
    <property type="entry name" value="dapE_proteo"/>
    <property type="match status" value="1"/>
</dbReference>
<dbReference type="NCBIfam" id="NF009557">
    <property type="entry name" value="PRK13009.1"/>
    <property type="match status" value="1"/>
</dbReference>
<dbReference type="PANTHER" id="PTHR43808">
    <property type="entry name" value="ACETYLORNITHINE DEACETYLASE"/>
    <property type="match status" value="1"/>
</dbReference>
<dbReference type="PANTHER" id="PTHR43808:SF31">
    <property type="entry name" value="N-ACETYL-L-CITRULLINE DEACETYLASE"/>
    <property type="match status" value="1"/>
</dbReference>
<dbReference type="Pfam" id="PF07687">
    <property type="entry name" value="M20_dimer"/>
    <property type="match status" value="1"/>
</dbReference>
<dbReference type="Pfam" id="PF01546">
    <property type="entry name" value="Peptidase_M20"/>
    <property type="match status" value="1"/>
</dbReference>
<dbReference type="SUPFAM" id="SSF55031">
    <property type="entry name" value="Bacterial exopeptidase dimerisation domain"/>
    <property type="match status" value="1"/>
</dbReference>
<dbReference type="SUPFAM" id="SSF53187">
    <property type="entry name" value="Zn-dependent exopeptidases"/>
    <property type="match status" value="1"/>
</dbReference>
<dbReference type="PROSITE" id="PS00758">
    <property type="entry name" value="ARGE_DAPE_CPG2_1"/>
    <property type="match status" value="1"/>
</dbReference>
<gene>
    <name evidence="1" type="primary">dapE</name>
    <name type="ordered locus">BMA10247_1343</name>
</gene>
<evidence type="ECO:0000255" key="1">
    <source>
        <dbReference type="HAMAP-Rule" id="MF_01690"/>
    </source>
</evidence>
<organism>
    <name type="scientific">Burkholderia mallei (strain NCTC 10247)</name>
    <dbReference type="NCBI Taxonomy" id="320389"/>
    <lineage>
        <taxon>Bacteria</taxon>
        <taxon>Pseudomonadati</taxon>
        <taxon>Pseudomonadota</taxon>
        <taxon>Betaproteobacteria</taxon>
        <taxon>Burkholderiales</taxon>
        <taxon>Burkholderiaceae</taxon>
        <taxon>Burkholderia</taxon>
        <taxon>pseudomallei group</taxon>
    </lineage>
</organism>
<name>DAPE_BURM7</name>
<comment type="function">
    <text evidence="1">Catalyzes the hydrolysis of N-succinyl-L,L-diaminopimelic acid (SDAP), forming succinate and LL-2,6-diaminopimelate (DAP), an intermediate involved in the bacterial biosynthesis of lysine and meso-diaminopimelic acid, an essential component of bacterial cell walls.</text>
</comment>
<comment type="catalytic activity">
    <reaction evidence="1">
        <text>N-succinyl-(2S,6S)-2,6-diaminopimelate + H2O = (2S,6S)-2,6-diaminopimelate + succinate</text>
        <dbReference type="Rhea" id="RHEA:22608"/>
        <dbReference type="ChEBI" id="CHEBI:15377"/>
        <dbReference type="ChEBI" id="CHEBI:30031"/>
        <dbReference type="ChEBI" id="CHEBI:57609"/>
        <dbReference type="ChEBI" id="CHEBI:58087"/>
        <dbReference type="EC" id="3.5.1.18"/>
    </reaction>
</comment>
<comment type="cofactor">
    <cofactor evidence="1">
        <name>Zn(2+)</name>
        <dbReference type="ChEBI" id="CHEBI:29105"/>
    </cofactor>
    <cofactor evidence="1">
        <name>Co(2+)</name>
        <dbReference type="ChEBI" id="CHEBI:48828"/>
    </cofactor>
    <text evidence="1">Binds 2 Zn(2+) or Co(2+) ions per subunit.</text>
</comment>
<comment type="pathway">
    <text evidence="1">Amino-acid biosynthesis; L-lysine biosynthesis via DAP pathway; LL-2,6-diaminopimelate from (S)-tetrahydrodipicolinate (succinylase route): step 3/3.</text>
</comment>
<comment type="subunit">
    <text evidence="1">Homodimer.</text>
</comment>
<comment type="similarity">
    <text evidence="1">Belongs to the peptidase M20A family. DapE subfamily.</text>
</comment>
<sequence>MSATLALTEQLIARASVTPDDQHCQQLMIERLAALGFECETIASHGVTNFWAVKRGTAGRAGKLLAFAGHTDVVPTGPLEQWRSPPFVPTHRDGKLYGRGAADMKTSLAGFVVAAEEFVAAHPQHRGSIGFLITSDEEGPATDGTVKVVEALAARGERLDYCIVGEPTSTATLGDVVKNGRRGSMSGELVVKGVQGHIAYPHLAKNPIHLLAPALAELAAEQWDEGNEYFPPTTWQVSNLRAGTGATNVIPGHADLLFNFRFSTASTVEGLQARVHAILDRHGLDYTLNWSVSGLPFLTPRGELSNALDAAIRAETGVSPELSTTGGTSDGRFIARICPQVIEFGPPNASIHKIDEHIDVRFVDPLKNVYRRVLEQLIA</sequence>
<keyword id="KW-0028">Amino-acid biosynthesis</keyword>
<keyword id="KW-0170">Cobalt</keyword>
<keyword id="KW-0220">Diaminopimelate biosynthesis</keyword>
<keyword id="KW-0378">Hydrolase</keyword>
<keyword id="KW-0457">Lysine biosynthesis</keyword>
<keyword id="KW-0479">Metal-binding</keyword>
<keyword id="KW-0862">Zinc</keyword>
<proteinExistence type="inferred from homology"/>
<reference key="1">
    <citation type="journal article" date="2010" name="Genome Biol. Evol.">
        <title>Continuing evolution of Burkholderia mallei through genome reduction and large-scale rearrangements.</title>
        <authorList>
            <person name="Losada L."/>
            <person name="Ronning C.M."/>
            <person name="DeShazer D."/>
            <person name="Woods D."/>
            <person name="Fedorova N."/>
            <person name="Kim H.S."/>
            <person name="Shabalina S.A."/>
            <person name="Pearson T.R."/>
            <person name="Brinkac L."/>
            <person name="Tan P."/>
            <person name="Nandi T."/>
            <person name="Crabtree J."/>
            <person name="Badger J."/>
            <person name="Beckstrom-Sternberg S."/>
            <person name="Saqib M."/>
            <person name="Schutzer S.E."/>
            <person name="Keim P."/>
            <person name="Nierman W.C."/>
        </authorList>
    </citation>
    <scope>NUCLEOTIDE SEQUENCE [LARGE SCALE GENOMIC DNA]</scope>
    <source>
        <strain>NCTC 10247</strain>
    </source>
</reference>
<accession>A3MKV8</accession>
<protein>
    <recommendedName>
        <fullName evidence="1">Succinyl-diaminopimelate desuccinylase</fullName>
        <shortName evidence="1">SDAP desuccinylase</shortName>
        <ecNumber evidence="1">3.5.1.18</ecNumber>
    </recommendedName>
    <alternativeName>
        <fullName evidence="1">N-succinyl-LL-2,6-diaminoheptanedioate amidohydrolase</fullName>
    </alternativeName>
</protein>
<feature type="chain" id="PRO_0000375503" description="Succinyl-diaminopimelate desuccinylase">
    <location>
        <begin position="1"/>
        <end position="379"/>
    </location>
</feature>
<feature type="active site" evidence="1">
    <location>
        <position position="72"/>
    </location>
</feature>
<feature type="active site" description="Proton acceptor" evidence="1">
    <location>
        <position position="137"/>
    </location>
</feature>
<feature type="binding site" evidence="1">
    <location>
        <position position="70"/>
    </location>
    <ligand>
        <name>Zn(2+)</name>
        <dbReference type="ChEBI" id="CHEBI:29105"/>
        <label>1</label>
    </ligand>
</feature>
<feature type="binding site" evidence="1">
    <location>
        <position position="103"/>
    </location>
    <ligand>
        <name>Zn(2+)</name>
        <dbReference type="ChEBI" id="CHEBI:29105"/>
        <label>1</label>
    </ligand>
</feature>
<feature type="binding site" evidence="1">
    <location>
        <position position="103"/>
    </location>
    <ligand>
        <name>Zn(2+)</name>
        <dbReference type="ChEBI" id="CHEBI:29105"/>
        <label>2</label>
    </ligand>
</feature>
<feature type="binding site" evidence="1">
    <location>
        <position position="138"/>
    </location>
    <ligand>
        <name>Zn(2+)</name>
        <dbReference type="ChEBI" id="CHEBI:29105"/>
        <label>2</label>
    </ligand>
</feature>
<feature type="binding site" evidence="1">
    <location>
        <position position="166"/>
    </location>
    <ligand>
        <name>Zn(2+)</name>
        <dbReference type="ChEBI" id="CHEBI:29105"/>
        <label>1</label>
    </ligand>
</feature>
<feature type="binding site" evidence="1">
    <location>
        <position position="352"/>
    </location>
    <ligand>
        <name>Zn(2+)</name>
        <dbReference type="ChEBI" id="CHEBI:29105"/>
        <label>2</label>
    </ligand>
</feature>